<dbReference type="EMBL" id="CP000038">
    <property type="protein sequence ID" value="AAZ89249.1"/>
    <property type="molecule type" value="Genomic_DNA"/>
</dbReference>
<dbReference type="RefSeq" id="WP_001080102.1">
    <property type="nucleotide sequence ID" value="NC_007384.1"/>
</dbReference>
<dbReference type="SMR" id="Q3YZ13"/>
<dbReference type="KEGG" id="ssn:SSON_2622"/>
<dbReference type="HOGENOM" id="CLU_055690_5_2_6"/>
<dbReference type="UniPathway" id="UPA00714"/>
<dbReference type="Proteomes" id="UP000002529">
    <property type="component" value="Chromosome"/>
</dbReference>
<dbReference type="GO" id="GO:0051537">
    <property type="term" value="F:2 iron, 2 sulfur cluster binding"/>
    <property type="evidence" value="ECO:0007669"/>
    <property type="project" value="UniProtKB-KW"/>
</dbReference>
<dbReference type="GO" id="GO:0008695">
    <property type="term" value="F:3-phenylpropionate dioxygenase activity"/>
    <property type="evidence" value="ECO:0007669"/>
    <property type="project" value="UniProtKB-UniRule"/>
</dbReference>
<dbReference type="GO" id="GO:0046872">
    <property type="term" value="F:metal ion binding"/>
    <property type="evidence" value="ECO:0007669"/>
    <property type="project" value="UniProtKB-KW"/>
</dbReference>
<dbReference type="GO" id="GO:0019380">
    <property type="term" value="P:3-phenylpropionate catabolic process"/>
    <property type="evidence" value="ECO:0007669"/>
    <property type="project" value="UniProtKB-UniRule"/>
</dbReference>
<dbReference type="CDD" id="cd03528">
    <property type="entry name" value="Rieske_RO_ferredoxin"/>
    <property type="match status" value="1"/>
</dbReference>
<dbReference type="FunFam" id="2.102.10.10:FF:000005">
    <property type="entry name" value="3-phenylpropionate/cinnamic acid dioxygenase ferredoxin subunit"/>
    <property type="match status" value="1"/>
</dbReference>
<dbReference type="Gene3D" id="2.102.10.10">
    <property type="entry name" value="Rieske [2Fe-2S] iron-sulphur domain"/>
    <property type="match status" value="1"/>
</dbReference>
<dbReference type="HAMAP" id="MF_01650">
    <property type="entry name" value="HcaC"/>
    <property type="match status" value="1"/>
</dbReference>
<dbReference type="InterPro" id="IPR023739">
    <property type="entry name" value="HcaC"/>
</dbReference>
<dbReference type="InterPro" id="IPR017941">
    <property type="entry name" value="Rieske_2Fe-2S"/>
</dbReference>
<dbReference type="InterPro" id="IPR036922">
    <property type="entry name" value="Rieske_2Fe-2S_sf"/>
</dbReference>
<dbReference type="InterPro" id="IPR053387">
    <property type="entry name" value="Ring-hydroxylating_fd"/>
</dbReference>
<dbReference type="NCBIfam" id="NF042948">
    <property type="entry name" value="3PPDioc_HcaC"/>
    <property type="match status" value="1"/>
</dbReference>
<dbReference type="NCBIfam" id="NF007422">
    <property type="entry name" value="PRK09965.1"/>
    <property type="match status" value="1"/>
</dbReference>
<dbReference type="PANTHER" id="PTHR21496:SF23">
    <property type="entry name" value="3-PHENYLPROPIONATE_CINNAMIC ACID DIOXYGENASE FERREDOXIN SUBUNIT"/>
    <property type="match status" value="1"/>
</dbReference>
<dbReference type="PANTHER" id="PTHR21496">
    <property type="entry name" value="FERREDOXIN-RELATED"/>
    <property type="match status" value="1"/>
</dbReference>
<dbReference type="Pfam" id="PF00355">
    <property type="entry name" value="Rieske"/>
    <property type="match status" value="1"/>
</dbReference>
<dbReference type="SUPFAM" id="SSF50022">
    <property type="entry name" value="ISP domain"/>
    <property type="match status" value="1"/>
</dbReference>
<dbReference type="PROSITE" id="PS51296">
    <property type="entry name" value="RIESKE"/>
    <property type="match status" value="1"/>
</dbReference>
<feature type="chain" id="PRO_0000333723" description="3-phenylpropionate/cinnamic acid dioxygenase ferredoxin subunit">
    <location>
        <begin position="1"/>
        <end position="106"/>
    </location>
</feature>
<feature type="domain" description="Rieske" evidence="1">
    <location>
        <begin position="4"/>
        <end position="99"/>
    </location>
</feature>
<feature type="binding site" evidence="1">
    <location>
        <position position="42"/>
    </location>
    <ligand>
        <name>[2Fe-2S] cluster</name>
        <dbReference type="ChEBI" id="CHEBI:190135"/>
    </ligand>
</feature>
<feature type="binding site" evidence="1">
    <location>
        <position position="44"/>
    </location>
    <ligand>
        <name>[2Fe-2S] cluster</name>
        <dbReference type="ChEBI" id="CHEBI:190135"/>
    </ligand>
</feature>
<feature type="binding site" evidence="1">
    <location>
        <position position="62"/>
    </location>
    <ligand>
        <name>[2Fe-2S] cluster</name>
        <dbReference type="ChEBI" id="CHEBI:190135"/>
    </ligand>
</feature>
<feature type="binding site" evidence="1">
    <location>
        <position position="65"/>
    </location>
    <ligand>
        <name>[2Fe-2S] cluster</name>
        <dbReference type="ChEBI" id="CHEBI:190135"/>
    </ligand>
</feature>
<name>HCAC_SHISS</name>
<gene>
    <name evidence="1" type="primary">hcaC</name>
    <name type="ordered locus">SSON_2622</name>
</gene>
<accession>Q3YZ13</accession>
<reference key="1">
    <citation type="journal article" date="2005" name="Nucleic Acids Res.">
        <title>Genome dynamics and diversity of Shigella species, the etiologic agents of bacillary dysentery.</title>
        <authorList>
            <person name="Yang F."/>
            <person name="Yang J."/>
            <person name="Zhang X."/>
            <person name="Chen L."/>
            <person name="Jiang Y."/>
            <person name="Yan Y."/>
            <person name="Tang X."/>
            <person name="Wang J."/>
            <person name="Xiong Z."/>
            <person name="Dong J."/>
            <person name="Xue Y."/>
            <person name="Zhu Y."/>
            <person name="Xu X."/>
            <person name="Sun L."/>
            <person name="Chen S."/>
            <person name="Nie H."/>
            <person name="Peng J."/>
            <person name="Xu J."/>
            <person name="Wang Y."/>
            <person name="Yuan Z."/>
            <person name="Wen Y."/>
            <person name="Yao Z."/>
            <person name="Shen Y."/>
            <person name="Qiang B."/>
            <person name="Hou Y."/>
            <person name="Yu J."/>
            <person name="Jin Q."/>
        </authorList>
    </citation>
    <scope>NUCLEOTIDE SEQUENCE [LARGE SCALE GENOMIC DNA]</scope>
    <source>
        <strain>Ss046</strain>
    </source>
</reference>
<proteinExistence type="inferred from homology"/>
<comment type="function">
    <text evidence="1">Part of the multicomponent 3-phenylpropionate dioxygenase, that converts 3-phenylpropionic acid (PP) and cinnamic acid (CI) into 3-phenylpropionate-dihydrodiol (PP-dihydrodiol) and cinnamic acid-dihydrodiol (CI-dihydrodiol), respectively. This protein seems to be a 2Fe-2S ferredoxin.</text>
</comment>
<comment type="cofactor">
    <cofactor evidence="1">
        <name>[2Fe-2S] cluster</name>
        <dbReference type="ChEBI" id="CHEBI:190135"/>
    </cofactor>
    <text evidence="1">Binds 1 [2Fe-2S] cluster per subunit.</text>
</comment>
<comment type="pathway">
    <text evidence="1">Aromatic compound metabolism; 3-phenylpropanoate degradation.</text>
</comment>
<comment type="subunit">
    <text evidence="1">This dioxygenase system consists of four proteins: the two subunits of the hydroxylase component (HcaE and HcaF), a ferredoxin (HcaC) and a ferredoxin reductase (HcaD).</text>
</comment>
<comment type="similarity">
    <text evidence="1">Belongs to the bacterial ring-hydroxylating dioxygenase ferredoxin component family.</text>
</comment>
<organism>
    <name type="scientific">Shigella sonnei (strain Ss046)</name>
    <dbReference type="NCBI Taxonomy" id="300269"/>
    <lineage>
        <taxon>Bacteria</taxon>
        <taxon>Pseudomonadati</taxon>
        <taxon>Pseudomonadota</taxon>
        <taxon>Gammaproteobacteria</taxon>
        <taxon>Enterobacterales</taxon>
        <taxon>Enterobacteriaceae</taxon>
        <taxon>Shigella</taxon>
    </lineage>
</organism>
<evidence type="ECO:0000255" key="1">
    <source>
        <dbReference type="HAMAP-Rule" id="MF_01650"/>
    </source>
</evidence>
<protein>
    <recommendedName>
        <fullName evidence="1">3-phenylpropionate/cinnamic acid dioxygenase ferredoxin subunit</fullName>
    </recommendedName>
</protein>
<sequence length="106" mass="11329">MNRIYACPVADVPEGEALRIDTSPVIALFNVGGEFYAINDRCSHGNASMSEGYLEDDATVECPLHAASFCLKTGKALCLPATDPLTTYPVHVEGGDIFIDLPEAQP</sequence>
<keyword id="KW-0001">2Fe-2S</keyword>
<keyword id="KW-0058">Aromatic hydrocarbons catabolism</keyword>
<keyword id="KW-0249">Electron transport</keyword>
<keyword id="KW-0408">Iron</keyword>
<keyword id="KW-0411">Iron-sulfur</keyword>
<keyword id="KW-0479">Metal-binding</keyword>
<keyword id="KW-1185">Reference proteome</keyword>
<keyword id="KW-0813">Transport</keyword>